<comment type="subunit">
    <text evidence="1">Part of the 30S ribosomal subunit.</text>
</comment>
<comment type="subcellular location">
    <subcellularLocation>
        <location>Plastid</location>
        <location>Chloroplast</location>
    </subcellularLocation>
</comment>
<comment type="similarity">
    <text evidence="2">Belongs to the universal ribosomal protein uS3 family.</text>
</comment>
<accession>Q8MCA5</accession>
<proteinExistence type="inferred from homology"/>
<geneLocation type="chloroplast"/>
<dbReference type="EMBL" id="AF536225">
    <property type="protein sequence ID" value="AAN04888.1"/>
    <property type="molecule type" value="Genomic_DNA"/>
</dbReference>
<dbReference type="RefSeq" id="YP_007889703.1">
    <property type="nucleotide sequence ID" value="NC_021091.1"/>
</dbReference>
<dbReference type="SMR" id="Q8MCA5"/>
<dbReference type="GeneID" id="15382749"/>
<dbReference type="KEGG" id="var:15382749"/>
<dbReference type="OrthoDB" id="1337267at2759"/>
<dbReference type="GO" id="GO:0009507">
    <property type="term" value="C:chloroplast"/>
    <property type="evidence" value="ECO:0007669"/>
    <property type="project" value="UniProtKB-SubCell"/>
</dbReference>
<dbReference type="GO" id="GO:0022627">
    <property type="term" value="C:cytosolic small ribosomal subunit"/>
    <property type="evidence" value="ECO:0007669"/>
    <property type="project" value="TreeGrafter"/>
</dbReference>
<dbReference type="GO" id="GO:0019843">
    <property type="term" value="F:rRNA binding"/>
    <property type="evidence" value="ECO:0007669"/>
    <property type="project" value="UniProtKB-UniRule"/>
</dbReference>
<dbReference type="GO" id="GO:0003735">
    <property type="term" value="F:structural constituent of ribosome"/>
    <property type="evidence" value="ECO:0007669"/>
    <property type="project" value="InterPro"/>
</dbReference>
<dbReference type="GO" id="GO:0006412">
    <property type="term" value="P:translation"/>
    <property type="evidence" value="ECO:0007669"/>
    <property type="project" value="UniProtKB-UniRule"/>
</dbReference>
<dbReference type="CDD" id="cd02412">
    <property type="entry name" value="KH-II_30S_S3"/>
    <property type="match status" value="1"/>
</dbReference>
<dbReference type="FunFam" id="3.30.1140.32:FF:000003">
    <property type="entry name" value="30S ribosomal protein S3, chloroplastic"/>
    <property type="match status" value="1"/>
</dbReference>
<dbReference type="FunFam" id="3.30.300.20:FF:000008">
    <property type="entry name" value="30S ribosomal protein S3, chloroplastic"/>
    <property type="match status" value="1"/>
</dbReference>
<dbReference type="Gene3D" id="3.30.300.20">
    <property type="match status" value="1"/>
</dbReference>
<dbReference type="Gene3D" id="3.30.1140.32">
    <property type="entry name" value="Ribosomal protein S3, C-terminal domain"/>
    <property type="match status" value="1"/>
</dbReference>
<dbReference type="HAMAP" id="MF_01309_B">
    <property type="entry name" value="Ribosomal_uS3_B"/>
    <property type="match status" value="1"/>
</dbReference>
<dbReference type="InterPro" id="IPR015946">
    <property type="entry name" value="KH_dom-like_a/b"/>
</dbReference>
<dbReference type="InterPro" id="IPR004044">
    <property type="entry name" value="KH_dom_type_2"/>
</dbReference>
<dbReference type="InterPro" id="IPR009019">
    <property type="entry name" value="KH_sf_prok-type"/>
</dbReference>
<dbReference type="InterPro" id="IPR036419">
    <property type="entry name" value="Ribosomal_S3_C_sf"/>
</dbReference>
<dbReference type="InterPro" id="IPR005704">
    <property type="entry name" value="Ribosomal_uS3_bac-typ"/>
</dbReference>
<dbReference type="InterPro" id="IPR001351">
    <property type="entry name" value="Ribosomal_uS3_C"/>
</dbReference>
<dbReference type="InterPro" id="IPR018280">
    <property type="entry name" value="Ribosomal_uS3_CS"/>
</dbReference>
<dbReference type="NCBIfam" id="TIGR01009">
    <property type="entry name" value="rpsC_bact"/>
    <property type="match status" value="1"/>
</dbReference>
<dbReference type="PANTHER" id="PTHR11760">
    <property type="entry name" value="30S/40S RIBOSOMAL PROTEIN S3"/>
    <property type="match status" value="1"/>
</dbReference>
<dbReference type="PANTHER" id="PTHR11760:SF19">
    <property type="entry name" value="SMALL RIBOSOMAL SUBUNIT PROTEIN US3C"/>
    <property type="match status" value="1"/>
</dbReference>
<dbReference type="Pfam" id="PF00189">
    <property type="entry name" value="Ribosomal_S3_C"/>
    <property type="match status" value="1"/>
</dbReference>
<dbReference type="SUPFAM" id="SSF54814">
    <property type="entry name" value="Prokaryotic type KH domain (KH-domain type II)"/>
    <property type="match status" value="1"/>
</dbReference>
<dbReference type="SUPFAM" id="SSF54821">
    <property type="entry name" value="Ribosomal protein S3 C-terminal domain"/>
    <property type="match status" value="1"/>
</dbReference>
<dbReference type="PROSITE" id="PS50823">
    <property type="entry name" value="KH_TYPE_2"/>
    <property type="match status" value="1"/>
</dbReference>
<dbReference type="PROSITE" id="PS00548">
    <property type="entry name" value="RIBOSOMAL_S3"/>
    <property type="match status" value="1"/>
</dbReference>
<keyword id="KW-0150">Chloroplast</keyword>
<keyword id="KW-0934">Plastid</keyword>
<keyword id="KW-0687">Ribonucleoprotein</keyword>
<keyword id="KW-0689">Ribosomal protein</keyword>
<keyword id="KW-0694">RNA-binding</keyword>
<keyword id="KW-0699">rRNA-binding</keyword>
<organism>
    <name type="scientific">Phaseolus angularis</name>
    <name type="common">Azuki bean</name>
    <name type="synonym">Vigna angularis</name>
    <dbReference type="NCBI Taxonomy" id="3914"/>
    <lineage>
        <taxon>Eukaryota</taxon>
        <taxon>Viridiplantae</taxon>
        <taxon>Streptophyta</taxon>
        <taxon>Embryophyta</taxon>
        <taxon>Tracheophyta</taxon>
        <taxon>Spermatophyta</taxon>
        <taxon>Magnoliopsida</taxon>
        <taxon>eudicotyledons</taxon>
        <taxon>Gunneridae</taxon>
        <taxon>Pentapetalae</taxon>
        <taxon>rosids</taxon>
        <taxon>fabids</taxon>
        <taxon>Fabales</taxon>
        <taxon>Fabaceae</taxon>
        <taxon>Papilionoideae</taxon>
        <taxon>50 kb inversion clade</taxon>
        <taxon>NPAAA clade</taxon>
        <taxon>indigoferoid/millettioid clade</taxon>
        <taxon>Phaseoleae</taxon>
        <taxon>Vigna</taxon>
    </lineage>
</organism>
<reference key="1">
    <citation type="journal article" date="2002" name="DNA Res.">
        <title>Evolutionary re-organisation of a large operon in adzuki bean chloroplast DNA caused by inverted repeat movement.</title>
        <authorList>
            <person name="Perry A.S."/>
            <person name="Brennan S."/>
            <person name="Murphy D.J."/>
            <person name="Kavanagh T.A."/>
            <person name="Wolfe K.H."/>
        </authorList>
    </citation>
    <scope>NUCLEOTIDE SEQUENCE [GENOMIC DNA]</scope>
    <source>
        <strain>cv. Erimo-shozu</strain>
    </source>
</reference>
<sequence length="216" mass="24909">MGQKINPLGFRLGTTQSHDSIWFAQPTKYSENIQEDKKIRDWIKNYIQKNRRISSGVEGIGEIKIQKRIDLIQVIIYMGFPKLLIEGKPQKIEELQTNMHKKLNCVNRKLNIAIVKVTNAYKHPNILAEFIAGQLKNRVSFRKAMKKAIELTEQAGTKGVQVQIAGRIDGKEIARVEWIREGRVPLQTIRAKIEYCCYTVRTIYGVLGIKVWIFSK</sequence>
<evidence type="ECO:0000250" key="1"/>
<evidence type="ECO:0000305" key="2"/>
<name>RR3_PHAAN</name>
<feature type="chain" id="PRO_0000130297" description="Small ribosomal subunit protein uS3c">
    <location>
        <begin position="1"/>
        <end position="216"/>
    </location>
</feature>
<feature type="domain" description="KH type-2">
    <location>
        <begin position="43"/>
        <end position="118"/>
    </location>
</feature>
<protein>
    <recommendedName>
        <fullName evidence="2">Small ribosomal subunit protein uS3c</fullName>
    </recommendedName>
    <alternativeName>
        <fullName>30S ribosomal protein S3, chloroplastic</fullName>
    </alternativeName>
</protein>
<gene>
    <name type="primary">rps3</name>
</gene>